<comment type="similarity">
    <text evidence="1">Belongs to the bacterial ribosomal protein bS16 family.</text>
</comment>
<dbReference type="EMBL" id="CP001358">
    <property type="protein sequence ID" value="ACL49700.1"/>
    <property type="molecule type" value="Genomic_DNA"/>
</dbReference>
<dbReference type="SMR" id="B8J1U2"/>
<dbReference type="STRING" id="525146.Ddes_1803"/>
<dbReference type="KEGG" id="dds:Ddes_1803"/>
<dbReference type="eggNOG" id="COG0228">
    <property type="taxonomic scope" value="Bacteria"/>
</dbReference>
<dbReference type="HOGENOM" id="CLU_100590_5_0_7"/>
<dbReference type="GO" id="GO:0005737">
    <property type="term" value="C:cytoplasm"/>
    <property type="evidence" value="ECO:0007669"/>
    <property type="project" value="UniProtKB-ARBA"/>
</dbReference>
<dbReference type="GO" id="GO:0015935">
    <property type="term" value="C:small ribosomal subunit"/>
    <property type="evidence" value="ECO:0007669"/>
    <property type="project" value="TreeGrafter"/>
</dbReference>
<dbReference type="GO" id="GO:0003735">
    <property type="term" value="F:structural constituent of ribosome"/>
    <property type="evidence" value="ECO:0007669"/>
    <property type="project" value="InterPro"/>
</dbReference>
<dbReference type="GO" id="GO:0006412">
    <property type="term" value="P:translation"/>
    <property type="evidence" value="ECO:0007669"/>
    <property type="project" value="UniProtKB-UniRule"/>
</dbReference>
<dbReference type="Gene3D" id="3.30.1320.10">
    <property type="match status" value="1"/>
</dbReference>
<dbReference type="HAMAP" id="MF_00385">
    <property type="entry name" value="Ribosomal_bS16"/>
    <property type="match status" value="1"/>
</dbReference>
<dbReference type="InterPro" id="IPR000307">
    <property type="entry name" value="Ribosomal_bS16"/>
</dbReference>
<dbReference type="InterPro" id="IPR023803">
    <property type="entry name" value="Ribosomal_bS16_dom_sf"/>
</dbReference>
<dbReference type="NCBIfam" id="TIGR00002">
    <property type="entry name" value="S16"/>
    <property type="match status" value="1"/>
</dbReference>
<dbReference type="PANTHER" id="PTHR12919">
    <property type="entry name" value="30S RIBOSOMAL PROTEIN S16"/>
    <property type="match status" value="1"/>
</dbReference>
<dbReference type="PANTHER" id="PTHR12919:SF20">
    <property type="entry name" value="SMALL RIBOSOMAL SUBUNIT PROTEIN BS16M"/>
    <property type="match status" value="1"/>
</dbReference>
<dbReference type="Pfam" id="PF00886">
    <property type="entry name" value="Ribosomal_S16"/>
    <property type="match status" value="1"/>
</dbReference>
<dbReference type="SUPFAM" id="SSF54565">
    <property type="entry name" value="Ribosomal protein S16"/>
    <property type="match status" value="1"/>
</dbReference>
<proteinExistence type="inferred from homology"/>
<protein>
    <recommendedName>
        <fullName evidence="1">Small ribosomal subunit protein bS16</fullName>
    </recommendedName>
    <alternativeName>
        <fullName evidence="2">30S ribosomal protein S16</fullName>
    </alternativeName>
</protein>
<sequence length="79" mass="9056">MAVKLKLTRLGSKKHPFYRVVAATDETRRDGRPLEFLGYYNPMTDPVEVKLDADKIKEWLARGAEPTDTVRALIKKHMA</sequence>
<keyword id="KW-0687">Ribonucleoprotein</keyword>
<keyword id="KW-0689">Ribosomal protein</keyword>
<accession>B8J1U2</accession>
<reference key="1">
    <citation type="submission" date="2009-01" db="EMBL/GenBank/DDBJ databases">
        <title>Complete sequence of Desulfovibrio desulfuricans subsp. desulfuricans str. ATCC 27774.</title>
        <authorList>
            <consortium name="US DOE Joint Genome Institute"/>
            <person name="Lucas S."/>
            <person name="Copeland A."/>
            <person name="Lapidus A."/>
            <person name="Glavina del Rio T."/>
            <person name="Tice H."/>
            <person name="Bruce D."/>
            <person name="Goodwin L."/>
            <person name="Pitluck S."/>
            <person name="Sims D."/>
            <person name="Lu M."/>
            <person name="Kiss H."/>
            <person name="Meineke L."/>
            <person name="Brettin T."/>
            <person name="Detter J.C."/>
            <person name="Han C."/>
            <person name="Larimer F."/>
            <person name="Land M."/>
            <person name="Hauser L."/>
            <person name="Kyrpides N."/>
            <person name="Ovchinnikova G."/>
            <person name="Hazen T.C."/>
        </authorList>
    </citation>
    <scope>NUCLEOTIDE SEQUENCE [LARGE SCALE GENOMIC DNA]</scope>
    <source>
        <strain>ATCC 27774 / DSM 6949 / MB</strain>
    </source>
</reference>
<gene>
    <name evidence="1" type="primary">rpsP</name>
    <name type="ordered locus">Ddes_1803</name>
</gene>
<feature type="chain" id="PRO_1000196388" description="Small ribosomal subunit protein bS16">
    <location>
        <begin position="1"/>
        <end position="79"/>
    </location>
</feature>
<evidence type="ECO:0000255" key="1">
    <source>
        <dbReference type="HAMAP-Rule" id="MF_00385"/>
    </source>
</evidence>
<evidence type="ECO:0000305" key="2"/>
<organism>
    <name type="scientific">Desulfovibrio desulfuricans (strain ATCC 27774 / DSM 6949 / MB)</name>
    <dbReference type="NCBI Taxonomy" id="525146"/>
    <lineage>
        <taxon>Bacteria</taxon>
        <taxon>Pseudomonadati</taxon>
        <taxon>Thermodesulfobacteriota</taxon>
        <taxon>Desulfovibrionia</taxon>
        <taxon>Desulfovibrionales</taxon>
        <taxon>Desulfovibrionaceae</taxon>
        <taxon>Desulfovibrio</taxon>
    </lineage>
</organism>
<name>RS16_DESDA</name>